<reference key="1">
    <citation type="journal article" date="1988" name="EMBO J.">
        <title>Pilin expression in Neisseria gonorrhoeae is under both positive and negative transcriptional control.</title>
        <authorList>
            <person name="Taha M.K."/>
            <person name="So M."/>
            <person name="Seifert H.S."/>
            <person name="Billyard E."/>
            <person name="Marchal C."/>
        </authorList>
    </citation>
    <scope>NUCLEOTIDE SEQUENCE [GENOMIC DNA]</scope>
    <source>
        <strain>MS11A</strain>
    </source>
</reference>
<reference key="2">
    <citation type="submission" date="2002-02" db="EMBL/GenBank/DDBJ databases">
        <authorList>
            <person name="Lowther W.T."/>
            <person name="Brot N."/>
            <person name="Weissbach H."/>
            <person name="Honek J.F."/>
            <person name="Matthews B.W."/>
        </authorList>
    </citation>
    <scope>NUCLEOTIDE SEQUENCE [GENOMIC DNA]</scope>
</reference>
<reference key="3">
    <citation type="journal article" date="1996" name="Proc. Natl. Acad. Sci. U.S.A.">
        <title>Peptide methionine sulfoxide reductase contributes to the maintenance of adhesins in three major pathogens.</title>
        <authorList>
            <person name="Wizemann T.M."/>
            <person name="Moskovitz J."/>
            <person name="Pearce B.J."/>
            <person name="Cundell D."/>
            <person name="Arvidson C.G."/>
            <person name="So M."/>
            <person name="Weissbach H."/>
            <person name="Brot N."/>
            <person name="Masure H.R."/>
        </authorList>
    </citation>
    <scope>IDENTIFICATION OF PEPTIDE METHIONINE SULFOXIDE REDUCTASE ACTIVITY</scope>
    <scope>DISRUPTION PHENOTYPE</scope>
</reference>
<proteinExistence type="evidence at protein level"/>
<comment type="function">
    <text evidence="1">Has an important function as a repair enzyme for proteins that have been inactivated by oxidation (By similarity). Catalyzes the reversible oxidation-reduction of methionine sulfoxide in proteins to methionine.</text>
</comment>
<comment type="catalytic activity">
    <reaction>
        <text>L-methionyl-[protein] + [thioredoxin]-disulfide + H2O = L-methionyl-(S)-S-oxide-[protein] + [thioredoxin]-dithiol</text>
        <dbReference type="Rhea" id="RHEA:14217"/>
        <dbReference type="Rhea" id="RHEA-COMP:10698"/>
        <dbReference type="Rhea" id="RHEA-COMP:10700"/>
        <dbReference type="Rhea" id="RHEA-COMP:12313"/>
        <dbReference type="Rhea" id="RHEA-COMP:12315"/>
        <dbReference type="ChEBI" id="CHEBI:15377"/>
        <dbReference type="ChEBI" id="CHEBI:16044"/>
        <dbReference type="ChEBI" id="CHEBI:29950"/>
        <dbReference type="ChEBI" id="CHEBI:44120"/>
        <dbReference type="ChEBI" id="CHEBI:50058"/>
        <dbReference type="EC" id="1.8.4.11"/>
    </reaction>
</comment>
<comment type="catalytic activity">
    <reaction>
        <text>[thioredoxin]-disulfide + L-methionine + H2O = L-methionine (S)-S-oxide + [thioredoxin]-dithiol</text>
        <dbReference type="Rhea" id="RHEA:19993"/>
        <dbReference type="Rhea" id="RHEA-COMP:10698"/>
        <dbReference type="Rhea" id="RHEA-COMP:10700"/>
        <dbReference type="ChEBI" id="CHEBI:15377"/>
        <dbReference type="ChEBI" id="CHEBI:29950"/>
        <dbReference type="ChEBI" id="CHEBI:50058"/>
        <dbReference type="ChEBI" id="CHEBI:57844"/>
        <dbReference type="ChEBI" id="CHEBI:58772"/>
        <dbReference type="EC" id="1.8.4.11"/>
    </reaction>
</comment>
<comment type="catalytic activity">
    <reaction>
        <text>L-methionyl-[protein] + [thioredoxin]-disulfide + H2O = L-methionyl-(R)-S-oxide-[protein] + [thioredoxin]-dithiol</text>
        <dbReference type="Rhea" id="RHEA:24164"/>
        <dbReference type="Rhea" id="RHEA-COMP:10698"/>
        <dbReference type="Rhea" id="RHEA-COMP:10700"/>
        <dbReference type="Rhea" id="RHEA-COMP:12313"/>
        <dbReference type="Rhea" id="RHEA-COMP:12314"/>
        <dbReference type="ChEBI" id="CHEBI:15377"/>
        <dbReference type="ChEBI" id="CHEBI:16044"/>
        <dbReference type="ChEBI" id="CHEBI:29950"/>
        <dbReference type="ChEBI" id="CHEBI:45764"/>
        <dbReference type="ChEBI" id="CHEBI:50058"/>
        <dbReference type="EC" id="1.8.4.12"/>
    </reaction>
</comment>
<comment type="domain">
    <text>Possesses 2 methionine sulfoxide reductase domains (A/MsrA and B/MsrB) and 1 N-terminal thioredoxin domain. The domain B exhibits a thioredoxin dependent methionine sulfoxide reductase activity; the Cys-495 is probably involved in the reduction of MetSO and in formation of the sulfenic acid derivative. The regeneration of Cys-495 is probably done via formation of a disulfide bond with Cys-440 followed by its reduction by thioredoxin.</text>
</comment>
<comment type="disruption phenotype">
    <text evidence="3">Hyperpiliated and hyperadherent.</text>
</comment>
<comment type="similarity">
    <text evidence="4">In the N-terminal section; belongs to the thioredoxin family.</text>
</comment>
<comment type="similarity">
    <text evidence="4">In the central section; belongs to the MsrA Met sulfoxide reductase family.</text>
</comment>
<comment type="similarity">
    <text evidence="4">In the C-terminal section; belongs to the MsrB Met sulfoxide reductase family.</text>
</comment>
<comment type="caution">
    <text evidence="5">Was originally thought to play a role along with PilA in the transcription regulation of PilE.</text>
</comment>
<comment type="sequence caution" evidence="4">
    <conflict type="frameshift">
        <sequence resource="EMBL-CDS" id="CAA32146"/>
    </conflict>
</comment>
<feature type="chain" id="PRO_0000138508" description="Peptide methionine sulfoxide reductase MsrA/MsrB">
    <location>
        <begin position="1"/>
        <end position="522"/>
    </location>
</feature>
<feature type="domain" description="Thioredoxin">
    <location>
        <begin position="17"/>
        <end position="174"/>
    </location>
</feature>
<feature type="domain" description="MsrB" evidence="2">
    <location>
        <begin position="383"/>
        <end position="506"/>
    </location>
</feature>
<feature type="region of interest" description="Peptide methionine sulfoxide reductase A">
    <location>
        <begin position="199"/>
        <end position="354"/>
    </location>
</feature>
<feature type="active site" evidence="1">
    <location>
        <position position="207"/>
    </location>
</feature>
<feature type="active site" description="Nucleophile" evidence="2">
    <location>
        <position position="495"/>
    </location>
</feature>
<feature type="disulfide bond" description="Redox-active" evidence="1">
    <location>
        <begin position="68"/>
        <end position="71"/>
    </location>
</feature>
<feature type="disulfide bond" description="Redox-active" evidence="1">
    <location>
        <begin position="440"/>
        <end position="495"/>
    </location>
</feature>
<feature type="helix" evidence="7">
    <location>
        <begin position="34"/>
        <end position="38"/>
    </location>
</feature>
<feature type="strand" evidence="7">
    <location>
        <begin position="46"/>
        <end position="48"/>
    </location>
</feature>
<feature type="helix" evidence="7">
    <location>
        <begin position="49"/>
        <end position="52"/>
    </location>
</feature>
<feature type="strand" evidence="7">
    <location>
        <begin position="59"/>
        <end position="63"/>
    </location>
</feature>
<feature type="helix" evidence="7">
    <location>
        <begin position="69"/>
        <end position="82"/>
    </location>
</feature>
<feature type="helix" evidence="7">
    <location>
        <begin position="85"/>
        <end position="87"/>
    </location>
</feature>
<feature type="strand" evidence="7">
    <location>
        <begin position="90"/>
        <end position="96"/>
    </location>
</feature>
<feature type="helix" evidence="7">
    <location>
        <begin position="108"/>
        <end position="113"/>
    </location>
</feature>
<feature type="strand" evidence="7">
    <location>
        <begin position="123"/>
        <end position="125"/>
    </location>
</feature>
<feature type="helix" evidence="7">
    <location>
        <begin position="130"/>
        <end position="134"/>
    </location>
</feature>
<feature type="strand" evidence="7">
    <location>
        <begin position="139"/>
        <end position="146"/>
    </location>
</feature>
<feature type="strand" evidence="7">
    <location>
        <begin position="152"/>
        <end position="158"/>
    </location>
</feature>
<feature type="helix" evidence="7">
    <location>
        <begin position="162"/>
        <end position="170"/>
    </location>
</feature>
<feature type="helix" evidence="7">
    <location>
        <begin position="177"/>
        <end position="179"/>
    </location>
</feature>
<feature type="helix" evidence="6">
    <location>
        <begin position="383"/>
        <end position="386"/>
    </location>
</feature>
<feature type="turn" evidence="6">
    <location>
        <begin position="387"/>
        <end position="389"/>
    </location>
</feature>
<feature type="helix" evidence="6">
    <location>
        <begin position="392"/>
        <end position="400"/>
    </location>
</feature>
<feature type="helix" evidence="6">
    <location>
        <begin position="410"/>
        <end position="413"/>
    </location>
</feature>
<feature type="strand" evidence="6">
    <location>
        <begin position="417"/>
        <end position="422"/>
    </location>
</feature>
<feature type="turn" evidence="6">
    <location>
        <begin position="423"/>
        <end position="425"/>
    </location>
</feature>
<feature type="strand" evidence="6">
    <location>
        <begin position="428"/>
        <end position="431"/>
    </location>
</feature>
<feature type="helix" evidence="6">
    <location>
        <begin position="432"/>
        <end position="434"/>
    </location>
</feature>
<feature type="strand" evidence="6">
    <location>
        <begin position="439"/>
        <end position="442"/>
    </location>
</feature>
<feature type="strand" evidence="6">
    <location>
        <begin position="444"/>
        <end position="447"/>
    </location>
</feature>
<feature type="strand" evidence="6">
    <location>
        <begin position="453"/>
        <end position="459"/>
    </location>
</feature>
<feature type="strand" evidence="6">
    <location>
        <begin position="466"/>
        <end position="471"/>
    </location>
</feature>
<feature type="turn" evidence="6">
    <location>
        <begin position="472"/>
        <end position="474"/>
    </location>
</feature>
<feature type="strand" evidence="6">
    <location>
        <begin position="477"/>
        <end position="483"/>
    </location>
</feature>
<feature type="helix" evidence="6">
    <location>
        <begin position="487"/>
        <end position="489"/>
    </location>
</feature>
<feature type="strand" evidence="6">
    <location>
        <begin position="493"/>
        <end position="496"/>
    </location>
</feature>
<feature type="helix" evidence="6">
    <location>
        <begin position="498"/>
        <end position="500"/>
    </location>
</feature>
<feature type="strand" evidence="6">
    <location>
        <begin position="501"/>
        <end position="505"/>
    </location>
</feature>
<feature type="helix" evidence="6">
    <location>
        <begin position="506"/>
        <end position="512"/>
    </location>
</feature>
<feature type="helix" evidence="6">
    <location>
        <begin position="515"/>
        <end position="520"/>
    </location>
</feature>
<name>MSRAB_NEIGO</name>
<evidence type="ECO:0000250" key="1"/>
<evidence type="ECO:0000255" key="2">
    <source>
        <dbReference type="PROSITE-ProRule" id="PRU01126"/>
    </source>
</evidence>
<evidence type="ECO:0000269" key="3">
    <source>
    </source>
</evidence>
<evidence type="ECO:0000305" key="4"/>
<evidence type="ECO:0000305" key="5">
    <source>
    </source>
</evidence>
<evidence type="ECO:0007829" key="6">
    <source>
        <dbReference type="PDB" id="1L1D"/>
    </source>
</evidence>
<evidence type="ECO:0007829" key="7">
    <source>
        <dbReference type="PDB" id="2H30"/>
    </source>
</evidence>
<gene>
    <name type="primary">msrAB</name>
    <name type="synonym">pilB</name>
</gene>
<accession>P14930</accession>
<dbReference type="EC" id="1.8.4.11"/>
<dbReference type="EC" id="1.8.4.12"/>
<dbReference type="EMBL" id="X13966">
    <property type="protein sequence ID" value="CAA32146.1"/>
    <property type="status" value="ALT_FRAME"/>
    <property type="molecule type" value="Genomic_DNA"/>
</dbReference>
<dbReference type="EMBL" id="AF482946">
    <property type="protein sequence ID" value="AAL89752.1"/>
    <property type="molecule type" value="Genomic_DNA"/>
</dbReference>
<dbReference type="PIR" id="S02018">
    <property type="entry name" value="S02018"/>
</dbReference>
<dbReference type="RefSeq" id="WP_003696288.1">
    <property type="nucleotide sequence ID" value="NZ_RJYO01000004.1"/>
</dbReference>
<dbReference type="PDB" id="1L1D">
    <property type="method" value="X-ray"/>
    <property type="resolution" value="1.85 A"/>
    <property type="chains" value="A/B=375-522"/>
</dbReference>
<dbReference type="PDB" id="2H30">
    <property type="method" value="X-ray"/>
    <property type="resolution" value="1.60 A"/>
    <property type="chains" value="A=23-182"/>
</dbReference>
<dbReference type="PDBsum" id="1L1D"/>
<dbReference type="PDBsum" id="2H30"/>
<dbReference type="BMRB" id="P14930"/>
<dbReference type="SMR" id="P14930"/>
<dbReference type="PATRIC" id="fig|485.49.peg.1916"/>
<dbReference type="BRENDA" id="1.8.4.11">
    <property type="organism ID" value="3590"/>
</dbReference>
<dbReference type="BRENDA" id="1.8.4.12">
    <property type="organism ID" value="3590"/>
</dbReference>
<dbReference type="EvolutionaryTrace" id="P14930"/>
<dbReference type="GO" id="GO:0005737">
    <property type="term" value="C:cytoplasm"/>
    <property type="evidence" value="ECO:0007669"/>
    <property type="project" value="TreeGrafter"/>
</dbReference>
<dbReference type="GO" id="GO:0036456">
    <property type="term" value="F:L-methionine-(S)-S-oxide reductase activity"/>
    <property type="evidence" value="ECO:0007669"/>
    <property type="project" value="TreeGrafter"/>
</dbReference>
<dbReference type="GO" id="GO:0033743">
    <property type="term" value="F:peptide-methionine (R)-S-oxide reductase activity"/>
    <property type="evidence" value="ECO:0007669"/>
    <property type="project" value="UniProtKB-UniRule"/>
</dbReference>
<dbReference type="GO" id="GO:0008113">
    <property type="term" value="F:peptide-methionine (S)-S-oxide reductase activity"/>
    <property type="evidence" value="ECO:0007669"/>
    <property type="project" value="UniProtKB-UniRule"/>
</dbReference>
<dbReference type="GO" id="GO:0034599">
    <property type="term" value="P:cellular response to oxidative stress"/>
    <property type="evidence" value="ECO:0007669"/>
    <property type="project" value="TreeGrafter"/>
</dbReference>
<dbReference type="GO" id="GO:0036211">
    <property type="term" value="P:protein modification process"/>
    <property type="evidence" value="ECO:0007669"/>
    <property type="project" value="UniProtKB-UniRule"/>
</dbReference>
<dbReference type="CDD" id="cd02966">
    <property type="entry name" value="TlpA_like_family"/>
    <property type="match status" value="1"/>
</dbReference>
<dbReference type="FunFam" id="3.40.30.10:FF:000321">
    <property type="entry name" value="Multifunctional fusion protein"/>
    <property type="match status" value="1"/>
</dbReference>
<dbReference type="FunFam" id="3.30.1060.10:FF:000007">
    <property type="entry name" value="Peptide methionine sulfoxide reductase msrA/msrB"/>
    <property type="match status" value="1"/>
</dbReference>
<dbReference type="FunFam" id="2.170.150.20:FF:000003">
    <property type="entry name" value="Peptide methionine sulfoxide reductase MsrB"/>
    <property type="match status" value="1"/>
</dbReference>
<dbReference type="Gene3D" id="3.40.30.10">
    <property type="entry name" value="Glutaredoxin"/>
    <property type="match status" value="1"/>
</dbReference>
<dbReference type="Gene3D" id="2.170.150.20">
    <property type="entry name" value="Peptide methionine sulfoxide reductase"/>
    <property type="match status" value="1"/>
</dbReference>
<dbReference type="Gene3D" id="3.30.1060.10">
    <property type="entry name" value="Peptide methionine sulphoxide reductase MsrA"/>
    <property type="match status" value="1"/>
</dbReference>
<dbReference type="HAMAP" id="MF_01401">
    <property type="entry name" value="MsrA"/>
    <property type="match status" value="1"/>
</dbReference>
<dbReference type="HAMAP" id="MF_01400">
    <property type="entry name" value="MsrB"/>
    <property type="match status" value="1"/>
</dbReference>
<dbReference type="InterPro" id="IPR002569">
    <property type="entry name" value="Met_Sox_Rdtase_MsrA_dom"/>
</dbReference>
<dbReference type="InterPro" id="IPR036509">
    <property type="entry name" value="Met_Sox_Rdtase_MsrA_sf"/>
</dbReference>
<dbReference type="InterPro" id="IPR002579">
    <property type="entry name" value="Met_Sox_Rdtase_MsrB_dom"/>
</dbReference>
<dbReference type="InterPro" id="IPR050162">
    <property type="entry name" value="MsrA_MetSO_reductase"/>
</dbReference>
<dbReference type="InterPro" id="IPR011057">
    <property type="entry name" value="Mss4-like_sf"/>
</dbReference>
<dbReference type="InterPro" id="IPR013740">
    <property type="entry name" value="Redoxin"/>
</dbReference>
<dbReference type="InterPro" id="IPR036249">
    <property type="entry name" value="Thioredoxin-like_sf"/>
</dbReference>
<dbReference type="InterPro" id="IPR013766">
    <property type="entry name" value="Thioredoxin_domain"/>
</dbReference>
<dbReference type="NCBIfam" id="TIGR00401">
    <property type="entry name" value="msrA"/>
    <property type="match status" value="1"/>
</dbReference>
<dbReference type="NCBIfam" id="TIGR00357">
    <property type="entry name" value="peptide-methionine (R)-S-oxide reductase MsrB"/>
    <property type="match status" value="1"/>
</dbReference>
<dbReference type="NCBIfam" id="NF010625">
    <property type="entry name" value="PRK14018.1"/>
    <property type="match status" value="1"/>
</dbReference>
<dbReference type="PANTHER" id="PTHR42799">
    <property type="entry name" value="MITOCHONDRIAL PEPTIDE METHIONINE SULFOXIDE REDUCTASE"/>
    <property type="match status" value="1"/>
</dbReference>
<dbReference type="PANTHER" id="PTHR42799:SF2">
    <property type="entry name" value="MITOCHONDRIAL PEPTIDE METHIONINE SULFOXIDE REDUCTASE"/>
    <property type="match status" value="1"/>
</dbReference>
<dbReference type="Pfam" id="PF01625">
    <property type="entry name" value="PMSR"/>
    <property type="match status" value="1"/>
</dbReference>
<dbReference type="Pfam" id="PF08534">
    <property type="entry name" value="Redoxin"/>
    <property type="match status" value="1"/>
</dbReference>
<dbReference type="Pfam" id="PF01641">
    <property type="entry name" value="SelR"/>
    <property type="match status" value="1"/>
</dbReference>
<dbReference type="SUPFAM" id="SSF51316">
    <property type="entry name" value="Mss4-like"/>
    <property type="match status" value="1"/>
</dbReference>
<dbReference type="SUPFAM" id="SSF55068">
    <property type="entry name" value="Peptide methionine sulfoxide reductase"/>
    <property type="match status" value="1"/>
</dbReference>
<dbReference type="SUPFAM" id="SSF52833">
    <property type="entry name" value="Thioredoxin-like"/>
    <property type="match status" value="1"/>
</dbReference>
<dbReference type="PROSITE" id="PS51790">
    <property type="entry name" value="MSRB"/>
    <property type="match status" value="1"/>
</dbReference>
<dbReference type="PROSITE" id="PS51352">
    <property type="entry name" value="THIOREDOXIN_2"/>
    <property type="match status" value="1"/>
</dbReference>
<organism>
    <name type="scientific">Neisseria gonorrhoeae</name>
    <dbReference type="NCBI Taxonomy" id="485"/>
    <lineage>
        <taxon>Bacteria</taxon>
        <taxon>Pseudomonadati</taxon>
        <taxon>Pseudomonadota</taxon>
        <taxon>Betaproteobacteria</taxon>
        <taxon>Neisseriales</taxon>
        <taxon>Neisseriaceae</taxon>
        <taxon>Neisseria</taxon>
    </lineage>
</organism>
<keyword id="KW-0002">3D-structure</keyword>
<keyword id="KW-1015">Disulfide bond</keyword>
<keyword id="KW-0249">Electron transport</keyword>
<keyword id="KW-0511">Multifunctional enzyme</keyword>
<keyword id="KW-0560">Oxidoreductase</keyword>
<keyword id="KW-0676">Redox-active center</keyword>
<keyword id="KW-0813">Transport</keyword>
<protein>
    <recommendedName>
        <fullName>Peptide methionine sulfoxide reductase MsrA/MsrB</fullName>
    </recommendedName>
    <domain>
        <recommendedName>
            <fullName>Thioredoxin</fullName>
        </recommendedName>
    </domain>
    <domain>
        <recommendedName>
            <fullName>Peptide methionine sulfoxide reductase MsrA</fullName>
            <shortName>Protein-methionine-S-oxide reductase</shortName>
            <ecNumber>1.8.4.11</ecNumber>
        </recommendedName>
        <alternativeName>
            <fullName>Peptide-methionine (S)-S-oxide reductase</fullName>
            <shortName>Peptide Met(O) reductase</shortName>
        </alternativeName>
    </domain>
    <domain>
        <recommendedName>
            <fullName>Peptide methionine sulfoxide reductase MsrB</fullName>
            <ecNumber>1.8.4.12</ecNumber>
        </recommendedName>
        <alternativeName>
            <fullName>Peptide-methionine (R)-S-oxide reductase</fullName>
        </alternativeName>
    </domain>
</protein>
<sequence length="522" mass="57959">MKHRTFFSLCAKFGCLLALGACSPKIVDAGTATVPHTLSTLKTADNRPASVYLKKDKPTLIKFWASWCPLCLSELGQAEKWAQDAKFSSANLITVASPGFLHEKKDGEFQKWYAGLNYPKLPVVTDNGGTIAQNLNISVYPSWALIGKDGDVQRIVKGSINEAQALALIRNPNADLGSLKHSFYKPDTQKKDSAIMNTRTIYLAGGCFWGLEAYFQRIDGVVDAVSGYANGNTENPSYEDVSYRHTGHAETVKVTYDADKLSLDDILQYYFRVVDPTSLNKQGNDTGTQYRSGVYYTDPAEKAVIAAALKREQQKYQLPLVVENEPLKNFYDAEEYHQDYLIKNPNGYCHIDIRKADEPLPGKTKAAPQGKGFDAATYKKPSDAELKRTLTEEQYQVTQNSATEYAFSHEYDHLFKPGIYVDVVSGEPLFSSADKYDSGCGWPSFTRPIDAKSVTEHDDFSFNMRRTEVRSRAADSHLGHVFPDGPRDKGGLRYCINGASLKFIPLEQMDAAGYGALKGEVK</sequence>